<gene>
    <name evidence="1" type="primary">bioB</name>
    <name type="ordered locus">HPP12_1379</name>
</gene>
<dbReference type="EC" id="2.8.1.6" evidence="1"/>
<dbReference type="EMBL" id="CP001217">
    <property type="protein sequence ID" value="ACJ08527.1"/>
    <property type="molecule type" value="Genomic_DNA"/>
</dbReference>
<dbReference type="SMR" id="B6JNP9"/>
<dbReference type="KEGG" id="hpp:HPP12_1379"/>
<dbReference type="HOGENOM" id="CLU_033172_2_1_7"/>
<dbReference type="UniPathway" id="UPA00078">
    <property type="reaction ID" value="UER00162"/>
</dbReference>
<dbReference type="Proteomes" id="UP000008198">
    <property type="component" value="Chromosome"/>
</dbReference>
<dbReference type="GO" id="GO:0051537">
    <property type="term" value="F:2 iron, 2 sulfur cluster binding"/>
    <property type="evidence" value="ECO:0007669"/>
    <property type="project" value="UniProtKB-KW"/>
</dbReference>
<dbReference type="GO" id="GO:0051539">
    <property type="term" value="F:4 iron, 4 sulfur cluster binding"/>
    <property type="evidence" value="ECO:0007669"/>
    <property type="project" value="UniProtKB-KW"/>
</dbReference>
<dbReference type="GO" id="GO:0004076">
    <property type="term" value="F:biotin synthase activity"/>
    <property type="evidence" value="ECO:0007669"/>
    <property type="project" value="UniProtKB-UniRule"/>
</dbReference>
<dbReference type="GO" id="GO:0005506">
    <property type="term" value="F:iron ion binding"/>
    <property type="evidence" value="ECO:0007669"/>
    <property type="project" value="UniProtKB-UniRule"/>
</dbReference>
<dbReference type="GO" id="GO:0009102">
    <property type="term" value="P:biotin biosynthetic process"/>
    <property type="evidence" value="ECO:0007669"/>
    <property type="project" value="UniProtKB-UniRule"/>
</dbReference>
<dbReference type="CDD" id="cd01335">
    <property type="entry name" value="Radical_SAM"/>
    <property type="match status" value="1"/>
</dbReference>
<dbReference type="FunFam" id="3.20.20.70:FF:000158">
    <property type="entry name" value="Biotin synthase"/>
    <property type="match status" value="1"/>
</dbReference>
<dbReference type="Gene3D" id="3.20.20.70">
    <property type="entry name" value="Aldolase class I"/>
    <property type="match status" value="1"/>
</dbReference>
<dbReference type="HAMAP" id="MF_01694">
    <property type="entry name" value="BioB"/>
    <property type="match status" value="1"/>
</dbReference>
<dbReference type="InterPro" id="IPR013785">
    <property type="entry name" value="Aldolase_TIM"/>
</dbReference>
<dbReference type="InterPro" id="IPR010722">
    <property type="entry name" value="BATS_dom"/>
</dbReference>
<dbReference type="InterPro" id="IPR002684">
    <property type="entry name" value="Biotin_synth/BioAB"/>
</dbReference>
<dbReference type="InterPro" id="IPR024177">
    <property type="entry name" value="Biotin_synthase"/>
</dbReference>
<dbReference type="InterPro" id="IPR006638">
    <property type="entry name" value="Elp3/MiaA/NifB-like_rSAM"/>
</dbReference>
<dbReference type="InterPro" id="IPR007197">
    <property type="entry name" value="rSAM"/>
</dbReference>
<dbReference type="NCBIfam" id="TIGR00433">
    <property type="entry name" value="bioB"/>
    <property type="match status" value="1"/>
</dbReference>
<dbReference type="NCBIfam" id="NF006308">
    <property type="entry name" value="PRK08508.1"/>
    <property type="match status" value="1"/>
</dbReference>
<dbReference type="PANTHER" id="PTHR22976">
    <property type="entry name" value="BIOTIN SYNTHASE"/>
    <property type="match status" value="1"/>
</dbReference>
<dbReference type="PANTHER" id="PTHR22976:SF2">
    <property type="entry name" value="BIOTIN SYNTHASE, MITOCHONDRIAL"/>
    <property type="match status" value="1"/>
</dbReference>
<dbReference type="Pfam" id="PF06968">
    <property type="entry name" value="BATS"/>
    <property type="match status" value="1"/>
</dbReference>
<dbReference type="Pfam" id="PF04055">
    <property type="entry name" value="Radical_SAM"/>
    <property type="match status" value="1"/>
</dbReference>
<dbReference type="PIRSF" id="PIRSF001619">
    <property type="entry name" value="Biotin_synth"/>
    <property type="match status" value="1"/>
</dbReference>
<dbReference type="SFLD" id="SFLDG01278">
    <property type="entry name" value="biotin_synthase_like"/>
    <property type="match status" value="1"/>
</dbReference>
<dbReference type="SFLD" id="SFLDS00029">
    <property type="entry name" value="Radical_SAM"/>
    <property type="match status" value="1"/>
</dbReference>
<dbReference type="SMART" id="SM00876">
    <property type="entry name" value="BATS"/>
    <property type="match status" value="1"/>
</dbReference>
<dbReference type="SMART" id="SM00729">
    <property type="entry name" value="Elp3"/>
    <property type="match status" value="1"/>
</dbReference>
<dbReference type="SUPFAM" id="SSF102114">
    <property type="entry name" value="Radical SAM enzymes"/>
    <property type="match status" value="1"/>
</dbReference>
<dbReference type="PROSITE" id="PS51918">
    <property type="entry name" value="RADICAL_SAM"/>
    <property type="match status" value="1"/>
</dbReference>
<proteinExistence type="inferred from homology"/>
<organism>
    <name type="scientific">Helicobacter pylori (strain P12)</name>
    <dbReference type="NCBI Taxonomy" id="570508"/>
    <lineage>
        <taxon>Bacteria</taxon>
        <taxon>Pseudomonadati</taxon>
        <taxon>Campylobacterota</taxon>
        <taxon>Epsilonproteobacteria</taxon>
        <taxon>Campylobacterales</taxon>
        <taxon>Helicobacteraceae</taxon>
        <taxon>Helicobacter</taxon>
    </lineage>
</organism>
<feature type="chain" id="PRO_0000381425" description="Biotin synthase">
    <location>
        <begin position="1"/>
        <end position="282"/>
    </location>
</feature>
<feature type="domain" description="Radical SAM core" evidence="2">
    <location>
        <begin position="1"/>
        <end position="228"/>
    </location>
</feature>
<feature type="binding site" evidence="1">
    <location>
        <position position="17"/>
    </location>
    <ligand>
        <name>[4Fe-4S] cluster</name>
        <dbReference type="ChEBI" id="CHEBI:49883"/>
        <note>4Fe-4S-S-AdoMet</note>
    </ligand>
</feature>
<feature type="binding site" evidence="1">
    <location>
        <position position="21"/>
    </location>
    <ligand>
        <name>[4Fe-4S] cluster</name>
        <dbReference type="ChEBI" id="CHEBI:49883"/>
        <note>4Fe-4S-S-AdoMet</note>
    </ligand>
</feature>
<feature type="binding site" evidence="1">
    <location>
        <position position="24"/>
    </location>
    <ligand>
        <name>[4Fe-4S] cluster</name>
        <dbReference type="ChEBI" id="CHEBI:49883"/>
        <note>4Fe-4S-S-AdoMet</note>
    </ligand>
</feature>
<feature type="binding site" evidence="1">
    <location>
        <position position="61"/>
    </location>
    <ligand>
        <name>[2Fe-2S] cluster</name>
        <dbReference type="ChEBI" id="CHEBI:190135"/>
    </ligand>
</feature>
<feature type="binding site" evidence="1">
    <location>
        <position position="96"/>
    </location>
    <ligand>
        <name>[2Fe-2S] cluster</name>
        <dbReference type="ChEBI" id="CHEBI:190135"/>
    </ligand>
</feature>
<feature type="binding site" evidence="1">
    <location>
        <position position="154"/>
    </location>
    <ligand>
        <name>[2Fe-2S] cluster</name>
        <dbReference type="ChEBI" id="CHEBI:190135"/>
    </ligand>
</feature>
<feature type="binding site" evidence="1">
    <location>
        <position position="221"/>
    </location>
    <ligand>
        <name>[2Fe-2S] cluster</name>
        <dbReference type="ChEBI" id="CHEBI:190135"/>
    </ligand>
</feature>
<name>BIOB_HELP2</name>
<evidence type="ECO:0000255" key="1">
    <source>
        <dbReference type="HAMAP-Rule" id="MF_01694"/>
    </source>
</evidence>
<evidence type="ECO:0000255" key="2">
    <source>
        <dbReference type="PROSITE-ProRule" id="PRU01266"/>
    </source>
</evidence>
<comment type="function">
    <text evidence="1">Catalyzes the conversion of dethiobiotin (DTB) to biotin by the insertion of a sulfur atom into dethiobiotin via a radical-based mechanism.</text>
</comment>
<comment type="catalytic activity">
    <reaction evidence="1">
        <text>(4R,5S)-dethiobiotin + (sulfur carrier)-SH + 2 reduced [2Fe-2S]-[ferredoxin] + 2 S-adenosyl-L-methionine = (sulfur carrier)-H + biotin + 2 5'-deoxyadenosine + 2 L-methionine + 2 oxidized [2Fe-2S]-[ferredoxin]</text>
        <dbReference type="Rhea" id="RHEA:22060"/>
        <dbReference type="Rhea" id="RHEA-COMP:10000"/>
        <dbReference type="Rhea" id="RHEA-COMP:10001"/>
        <dbReference type="Rhea" id="RHEA-COMP:14737"/>
        <dbReference type="Rhea" id="RHEA-COMP:14739"/>
        <dbReference type="ChEBI" id="CHEBI:17319"/>
        <dbReference type="ChEBI" id="CHEBI:29917"/>
        <dbReference type="ChEBI" id="CHEBI:33737"/>
        <dbReference type="ChEBI" id="CHEBI:33738"/>
        <dbReference type="ChEBI" id="CHEBI:57586"/>
        <dbReference type="ChEBI" id="CHEBI:57844"/>
        <dbReference type="ChEBI" id="CHEBI:59789"/>
        <dbReference type="ChEBI" id="CHEBI:64428"/>
        <dbReference type="ChEBI" id="CHEBI:149473"/>
        <dbReference type="EC" id="2.8.1.6"/>
    </reaction>
</comment>
<comment type="cofactor">
    <cofactor evidence="1">
        <name>[4Fe-4S] cluster</name>
        <dbReference type="ChEBI" id="CHEBI:49883"/>
    </cofactor>
    <text evidence="1">Binds 1 [4Fe-4S] cluster. The cluster is coordinated with 3 cysteines and an exchangeable S-adenosyl-L-methionine.</text>
</comment>
<comment type="cofactor">
    <cofactor evidence="1">
        <name>[2Fe-2S] cluster</name>
        <dbReference type="ChEBI" id="CHEBI:190135"/>
    </cofactor>
    <text evidence="1">Binds 1 [2Fe-2S] cluster. The cluster is coordinated with 3 cysteines and 1 arginine.</text>
</comment>
<comment type="pathway">
    <text evidence="1">Cofactor biosynthesis; biotin biosynthesis; biotin from 7,8-diaminononanoate: step 2/2.</text>
</comment>
<comment type="subunit">
    <text evidence="1">Homodimer.</text>
</comment>
<comment type="similarity">
    <text evidence="1">Belongs to the radical SAM superfamily. Biotin synthase family.</text>
</comment>
<accession>B6JNP9</accession>
<keyword id="KW-0001">2Fe-2S</keyword>
<keyword id="KW-0004">4Fe-4S</keyword>
<keyword id="KW-0093">Biotin biosynthesis</keyword>
<keyword id="KW-0408">Iron</keyword>
<keyword id="KW-0411">Iron-sulfur</keyword>
<keyword id="KW-0479">Metal-binding</keyword>
<keyword id="KW-0949">S-adenosyl-L-methionine</keyword>
<keyword id="KW-0808">Transferase</keyword>
<protein>
    <recommendedName>
        <fullName evidence="1">Biotin synthase</fullName>
        <ecNumber evidence="1">2.8.1.6</ecNumber>
    </recommendedName>
</protein>
<sequence>MQEIFLCSISNVRSGDCKEDCAYCTQSSHHQGAIKRYKFKDEKVVLQEARALKQLGALGFCLVTSGRELDDEKCEYIAKLAKAINKEELGLHLIACCGRADLEQLEFLRDAGIHSYNHNLETSQNFFPKICSTHTWEERFITCENALRAGLGLCSGGIFGLNESWEDRIEMLRALASLSPHTTPINFFIKNPVLPIDAETLSADEALECVLLAKEFLPNARLMVAGGREVVFKDNDKQEAKLFEYGINAVVLGDYLTTKGKAPKKDIEKLLSYGLTMATSCH</sequence>
<reference key="1">
    <citation type="submission" date="2008-10" db="EMBL/GenBank/DDBJ databases">
        <title>The complete genome sequence of Helicobacter pylori strain P12.</title>
        <authorList>
            <person name="Fischer W."/>
            <person name="Windhager L."/>
            <person name="Karnholz A."/>
            <person name="Zeiller M."/>
            <person name="Zimmer R."/>
            <person name="Haas R."/>
        </authorList>
    </citation>
    <scope>NUCLEOTIDE SEQUENCE [LARGE SCALE GENOMIC DNA]</scope>
    <source>
        <strain>P12</strain>
    </source>
</reference>